<feature type="chain" id="PRO_0000265785" description="ATP synthase epsilon chain">
    <location>
        <begin position="1"/>
        <end position="131"/>
    </location>
</feature>
<gene>
    <name evidence="1" type="primary">atpC</name>
    <name type="ordered locus">BLi03925</name>
    <name type="ordered locus">BL04001</name>
</gene>
<evidence type="ECO:0000255" key="1">
    <source>
        <dbReference type="HAMAP-Rule" id="MF_00530"/>
    </source>
</evidence>
<keyword id="KW-0066">ATP synthesis</keyword>
<keyword id="KW-1003">Cell membrane</keyword>
<keyword id="KW-0139">CF(1)</keyword>
<keyword id="KW-0375">Hydrogen ion transport</keyword>
<keyword id="KW-0406">Ion transport</keyword>
<keyword id="KW-0472">Membrane</keyword>
<keyword id="KW-1185">Reference proteome</keyword>
<keyword id="KW-0813">Transport</keyword>
<proteinExistence type="inferred from homology"/>
<sequence length="131" mass="14279">MKTLKVNIVTPDGPVYDADIEMVSVRAESGELGILPGHIPTVAPLKIAAVRLKKDGQTELVAVSGGIVEVRPDHVTILAQTAETSEQIDKERALAAKRRAEERLQKQTPDVDIIRAELALKRAINRLDVAR</sequence>
<name>ATPE_BACLD</name>
<dbReference type="EMBL" id="AE017333">
    <property type="protein sequence ID" value="AAU42739.1"/>
    <property type="molecule type" value="Genomic_DNA"/>
</dbReference>
<dbReference type="EMBL" id="CP000002">
    <property type="protein sequence ID" value="AAU25365.1"/>
    <property type="molecule type" value="Genomic_DNA"/>
</dbReference>
<dbReference type="RefSeq" id="WP_003186004.1">
    <property type="nucleotide sequence ID" value="NC_006322.1"/>
</dbReference>
<dbReference type="SMR" id="Q65DX5"/>
<dbReference type="STRING" id="279010.BL04001"/>
<dbReference type="KEGG" id="bld:BLi03925"/>
<dbReference type="KEGG" id="bli:BL04001"/>
<dbReference type="eggNOG" id="COG0355">
    <property type="taxonomic scope" value="Bacteria"/>
</dbReference>
<dbReference type="HOGENOM" id="CLU_084338_1_2_9"/>
<dbReference type="Proteomes" id="UP000000606">
    <property type="component" value="Chromosome"/>
</dbReference>
<dbReference type="GO" id="GO:0005886">
    <property type="term" value="C:plasma membrane"/>
    <property type="evidence" value="ECO:0007669"/>
    <property type="project" value="UniProtKB-SubCell"/>
</dbReference>
<dbReference type="GO" id="GO:0045259">
    <property type="term" value="C:proton-transporting ATP synthase complex"/>
    <property type="evidence" value="ECO:0007669"/>
    <property type="project" value="UniProtKB-KW"/>
</dbReference>
<dbReference type="GO" id="GO:0005524">
    <property type="term" value="F:ATP binding"/>
    <property type="evidence" value="ECO:0007669"/>
    <property type="project" value="UniProtKB-UniRule"/>
</dbReference>
<dbReference type="GO" id="GO:0046933">
    <property type="term" value="F:proton-transporting ATP synthase activity, rotational mechanism"/>
    <property type="evidence" value="ECO:0007669"/>
    <property type="project" value="UniProtKB-UniRule"/>
</dbReference>
<dbReference type="CDD" id="cd12152">
    <property type="entry name" value="F1-ATPase_delta"/>
    <property type="match status" value="1"/>
</dbReference>
<dbReference type="FunFam" id="1.20.5.440:FF:000001">
    <property type="entry name" value="ATP synthase epsilon chain"/>
    <property type="match status" value="1"/>
</dbReference>
<dbReference type="FunFam" id="2.60.15.10:FF:000001">
    <property type="entry name" value="ATP synthase epsilon chain"/>
    <property type="match status" value="1"/>
</dbReference>
<dbReference type="Gene3D" id="1.20.5.440">
    <property type="entry name" value="ATP synthase delta/epsilon subunit, C-terminal domain"/>
    <property type="match status" value="1"/>
</dbReference>
<dbReference type="Gene3D" id="2.60.15.10">
    <property type="entry name" value="F0F1 ATP synthase delta/epsilon subunit, N-terminal"/>
    <property type="match status" value="1"/>
</dbReference>
<dbReference type="HAMAP" id="MF_00530">
    <property type="entry name" value="ATP_synth_epsil_bac"/>
    <property type="match status" value="1"/>
</dbReference>
<dbReference type="InterPro" id="IPR036794">
    <property type="entry name" value="ATP_F1_dsu/esu_C_sf"/>
</dbReference>
<dbReference type="InterPro" id="IPR001469">
    <property type="entry name" value="ATP_synth_F1_dsu/esu"/>
</dbReference>
<dbReference type="InterPro" id="IPR020546">
    <property type="entry name" value="ATP_synth_F1_dsu/esu_N"/>
</dbReference>
<dbReference type="InterPro" id="IPR020547">
    <property type="entry name" value="ATP_synth_F1_esu_C"/>
</dbReference>
<dbReference type="InterPro" id="IPR036771">
    <property type="entry name" value="ATPsynth_dsu/esu_N"/>
</dbReference>
<dbReference type="NCBIfam" id="TIGR01216">
    <property type="entry name" value="ATP_synt_epsi"/>
    <property type="match status" value="1"/>
</dbReference>
<dbReference type="NCBIfam" id="NF001846">
    <property type="entry name" value="PRK00571.1-3"/>
    <property type="match status" value="1"/>
</dbReference>
<dbReference type="NCBIfam" id="NF009980">
    <property type="entry name" value="PRK13446.1"/>
    <property type="match status" value="1"/>
</dbReference>
<dbReference type="PANTHER" id="PTHR13822">
    <property type="entry name" value="ATP SYNTHASE DELTA/EPSILON CHAIN"/>
    <property type="match status" value="1"/>
</dbReference>
<dbReference type="PANTHER" id="PTHR13822:SF10">
    <property type="entry name" value="ATP SYNTHASE EPSILON CHAIN, CHLOROPLASTIC"/>
    <property type="match status" value="1"/>
</dbReference>
<dbReference type="Pfam" id="PF00401">
    <property type="entry name" value="ATP-synt_DE"/>
    <property type="match status" value="1"/>
</dbReference>
<dbReference type="Pfam" id="PF02823">
    <property type="entry name" value="ATP-synt_DE_N"/>
    <property type="match status" value="1"/>
</dbReference>
<dbReference type="SUPFAM" id="SSF46604">
    <property type="entry name" value="Epsilon subunit of F1F0-ATP synthase C-terminal domain"/>
    <property type="match status" value="1"/>
</dbReference>
<dbReference type="SUPFAM" id="SSF51344">
    <property type="entry name" value="Epsilon subunit of F1F0-ATP synthase N-terminal domain"/>
    <property type="match status" value="1"/>
</dbReference>
<accession>Q65DX5</accession>
<accession>Q62PE6</accession>
<organism>
    <name type="scientific">Bacillus licheniformis (strain ATCC 14580 / DSM 13 / JCM 2505 / CCUG 7422 / NBRC 12200 / NCIMB 9375 / NCTC 10341 / NRRL NRS-1264 / Gibson 46)</name>
    <dbReference type="NCBI Taxonomy" id="279010"/>
    <lineage>
        <taxon>Bacteria</taxon>
        <taxon>Bacillati</taxon>
        <taxon>Bacillota</taxon>
        <taxon>Bacilli</taxon>
        <taxon>Bacillales</taxon>
        <taxon>Bacillaceae</taxon>
        <taxon>Bacillus</taxon>
    </lineage>
</organism>
<protein>
    <recommendedName>
        <fullName evidence="1">ATP synthase epsilon chain</fullName>
    </recommendedName>
    <alternativeName>
        <fullName evidence="1">ATP synthase F1 sector epsilon subunit</fullName>
    </alternativeName>
    <alternativeName>
        <fullName evidence="1">F-ATPase epsilon subunit</fullName>
    </alternativeName>
</protein>
<reference key="1">
    <citation type="journal article" date="2004" name="J. Mol. Microbiol. Biotechnol.">
        <title>The complete genome sequence of Bacillus licheniformis DSM13, an organism with great industrial potential.</title>
        <authorList>
            <person name="Veith B."/>
            <person name="Herzberg C."/>
            <person name="Steckel S."/>
            <person name="Feesche J."/>
            <person name="Maurer K.H."/>
            <person name="Ehrenreich P."/>
            <person name="Baeumer S."/>
            <person name="Henne A."/>
            <person name="Liesegang H."/>
            <person name="Merkl R."/>
            <person name="Ehrenreich A."/>
            <person name="Gottschalk G."/>
        </authorList>
    </citation>
    <scope>NUCLEOTIDE SEQUENCE [LARGE SCALE GENOMIC DNA]</scope>
    <source>
        <strain>ATCC 14580 / DSM 13 / JCM 2505 / CCUG 7422 / NBRC 12200 / NCIMB 9375 / NCTC 10341 / NRRL NRS-1264 / Gibson 46</strain>
    </source>
</reference>
<reference key="2">
    <citation type="journal article" date="2004" name="Genome Biol.">
        <title>Complete genome sequence of the industrial bacterium Bacillus licheniformis and comparisons with closely related Bacillus species.</title>
        <authorList>
            <person name="Rey M.W."/>
            <person name="Ramaiya P."/>
            <person name="Nelson B.A."/>
            <person name="Brody-Karpin S.D."/>
            <person name="Zaretsky E.J."/>
            <person name="Tang M."/>
            <person name="Lopez de Leon A."/>
            <person name="Xiang H."/>
            <person name="Gusti V."/>
            <person name="Clausen I.G."/>
            <person name="Olsen P.B."/>
            <person name="Rasmussen M.D."/>
            <person name="Andersen J.T."/>
            <person name="Joergensen P.L."/>
            <person name="Larsen T.S."/>
            <person name="Sorokin A."/>
            <person name="Bolotin A."/>
            <person name="Lapidus A."/>
            <person name="Galleron N."/>
            <person name="Ehrlich S.D."/>
            <person name="Berka R.M."/>
        </authorList>
    </citation>
    <scope>NUCLEOTIDE SEQUENCE [LARGE SCALE GENOMIC DNA]</scope>
    <source>
        <strain>ATCC 14580 / DSM 13 / JCM 2505 / CCUG 7422 / NBRC 12200 / NCIMB 9375 / NCTC 10341 / NRRL NRS-1264 / Gibson 46</strain>
    </source>
</reference>
<comment type="function">
    <text evidence="1">Produces ATP from ADP in the presence of a proton gradient across the membrane.</text>
</comment>
<comment type="subunit">
    <text>F-type ATPases have 2 components, CF(1) - the catalytic core - and CF(0) - the membrane proton channel. CF(1) has five subunits: alpha(3), beta(3), gamma(1), delta(1), epsilon(1). CF(0) has three main subunits: a, b and c.</text>
</comment>
<comment type="subcellular location">
    <subcellularLocation>
        <location evidence="1">Cell membrane</location>
        <topology evidence="1">Peripheral membrane protein</topology>
    </subcellularLocation>
</comment>
<comment type="similarity">
    <text evidence="1">Belongs to the ATPase epsilon chain family.</text>
</comment>